<proteinExistence type="inferred from homology"/>
<protein>
    <recommendedName>
        <fullName evidence="1">3-dehydroquinate synthase</fullName>
        <shortName evidence="1">DHQS</shortName>
        <ecNumber evidence="1">4.2.3.4</ecNumber>
    </recommendedName>
</protein>
<sequence length="368" mass="40070">MWSATMERITVNLAERSYPITIGAGLFEDSAHLSSLTAGQKVVVITNVTVAPLYADKILSLLQSLGCQASLLELPDGEQYKSLDTFNQVMSFLLEGSFARDVVVIALGGGVIGDLVGFSAACYQRGVDFIQIPTTLLSQVDSSVGGKTAVNHPLGKNMIGAFYQPKSVIIDTNCLKTLPEREFAAGIAEVIKYGIIYDAEFFTWLDEHLDALYSLDEQALTYAIARCCEIKAEVVAQDEKESGIRALLNLGHTFGHAIEAELGYGNWLHGEAVAAGTVMAARTAQLQGMIDQQQFDKIFSILSRAKLPVHTPESMTFDDFMTHMMRDKKVLSGKLRLVLPSSIGTAEVVADVPQEVIRQAIEDCRTIN</sequence>
<reference key="1">
    <citation type="journal article" date="2003" name="Genome Res.">
        <title>Comparative genome analysis of Vibrio vulnificus, a marine pathogen.</title>
        <authorList>
            <person name="Chen C.-Y."/>
            <person name="Wu K.-M."/>
            <person name="Chang Y.-C."/>
            <person name="Chang C.-H."/>
            <person name="Tsai H.-C."/>
            <person name="Liao T.-L."/>
            <person name="Liu Y.-M."/>
            <person name="Chen H.-J."/>
            <person name="Shen A.B.-T."/>
            <person name="Li J.-C."/>
            <person name="Su T.-L."/>
            <person name="Shao C.-P."/>
            <person name="Lee C.-T."/>
            <person name="Hor L.-I."/>
            <person name="Tsai S.-F."/>
        </authorList>
    </citation>
    <scope>NUCLEOTIDE SEQUENCE [LARGE SCALE GENOMIC DNA]</scope>
    <source>
        <strain>YJ016</strain>
    </source>
</reference>
<organism>
    <name type="scientific">Vibrio vulnificus (strain YJ016)</name>
    <dbReference type="NCBI Taxonomy" id="196600"/>
    <lineage>
        <taxon>Bacteria</taxon>
        <taxon>Pseudomonadati</taxon>
        <taxon>Pseudomonadota</taxon>
        <taxon>Gammaproteobacteria</taxon>
        <taxon>Vibrionales</taxon>
        <taxon>Vibrionaceae</taxon>
        <taxon>Vibrio</taxon>
    </lineage>
</organism>
<feature type="chain" id="PRO_0000140807" description="3-dehydroquinate synthase">
    <location>
        <begin position="1"/>
        <end position="368"/>
    </location>
</feature>
<feature type="binding site" evidence="1">
    <location>
        <begin position="76"/>
        <end position="81"/>
    </location>
    <ligand>
        <name>NAD(+)</name>
        <dbReference type="ChEBI" id="CHEBI:57540"/>
    </ligand>
</feature>
<feature type="binding site" evidence="1">
    <location>
        <begin position="110"/>
        <end position="114"/>
    </location>
    <ligand>
        <name>NAD(+)</name>
        <dbReference type="ChEBI" id="CHEBI:57540"/>
    </ligand>
</feature>
<feature type="binding site" evidence="1">
    <location>
        <begin position="134"/>
        <end position="135"/>
    </location>
    <ligand>
        <name>NAD(+)</name>
        <dbReference type="ChEBI" id="CHEBI:57540"/>
    </ligand>
</feature>
<feature type="binding site" evidence="1">
    <location>
        <position position="147"/>
    </location>
    <ligand>
        <name>NAD(+)</name>
        <dbReference type="ChEBI" id="CHEBI:57540"/>
    </ligand>
</feature>
<feature type="binding site" evidence="1">
    <location>
        <position position="156"/>
    </location>
    <ligand>
        <name>NAD(+)</name>
        <dbReference type="ChEBI" id="CHEBI:57540"/>
    </ligand>
</feature>
<feature type="binding site" evidence="1">
    <location>
        <begin position="174"/>
        <end position="177"/>
    </location>
    <ligand>
        <name>NAD(+)</name>
        <dbReference type="ChEBI" id="CHEBI:57540"/>
    </ligand>
</feature>
<feature type="binding site" evidence="1">
    <location>
        <position position="189"/>
    </location>
    <ligand>
        <name>Zn(2+)</name>
        <dbReference type="ChEBI" id="CHEBI:29105"/>
    </ligand>
</feature>
<feature type="binding site" evidence="1">
    <location>
        <position position="252"/>
    </location>
    <ligand>
        <name>Zn(2+)</name>
        <dbReference type="ChEBI" id="CHEBI:29105"/>
    </ligand>
</feature>
<feature type="binding site" evidence="1">
    <location>
        <position position="269"/>
    </location>
    <ligand>
        <name>Zn(2+)</name>
        <dbReference type="ChEBI" id="CHEBI:29105"/>
    </ligand>
</feature>
<name>AROB_VIBVY</name>
<dbReference type="EC" id="4.2.3.4" evidence="1"/>
<dbReference type="EMBL" id="BA000037">
    <property type="protein sequence ID" value="BAC95752.1"/>
    <property type="molecule type" value="Genomic_DNA"/>
</dbReference>
<dbReference type="SMR" id="Q7MH84"/>
<dbReference type="STRING" id="672.VV93_v1c27170"/>
<dbReference type="KEGG" id="vvy:VV2988"/>
<dbReference type="eggNOG" id="COG0337">
    <property type="taxonomic scope" value="Bacteria"/>
</dbReference>
<dbReference type="HOGENOM" id="CLU_001201_0_2_6"/>
<dbReference type="UniPathway" id="UPA00053">
    <property type="reaction ID" value="UER00085"/>
</dbReference>
<dbReference type="Proteomes" id="UP000002675">
    <property type="component" value="Chromosome I"/>
</dbReference>
<dbReference type="GO" id="GO:0005737">
    <property type="term" value="C:cytoplasm"/>
    <property type="evidence" value="ECO:0007669"/>
    <property type="project" value="UniProtKB-SubCell"/>
</dbReference>
<dbReference type="GO" id="GO:0003856">
    <property type="term" value="F:3-dehydroquinate synthase activity"/>
    <property type="evidence" value="ECO:0007669"/>
    <property type="project" value="UniProtKB-UniRule"/>
</dbReference>
<dbReference type="GO" id="GO:0046872">
    <property type="term" value="F:metal ion binding"/>
    <property type="evidence" value="ECO:0007669"/>
    <property type="project" value="UniProtKB-KW"/>
</dbReference>
<dbReference type="GO" id="GO:0000166">
    <property type="term" value="F:nucleotide binding"/>
    <property type="evidence" value="ECO:0007669"/>
    <property type="project" value="UniProtKB-KW"/>
</dbReference>
<dbReference type="GO" id="GO:0008652">
    <property type="term" value="P:amino acid biosynthetic process"/>
    <property type="evidence" value="ECO:0007669"/>
    <property type="project" value="UniProtKB-KW"/>
</dbReference>
<dbReference type="GO" id="GO:0009073">
    <property type="term" value="P:aromatic amino acid family biosynthetic process"/>
    <property type="evidence" value="ECO:0007669"/>
    <property type="project" value="UniProtKB-KW"/>
</dbReference>
<dbReference type="GO" id="GO:0009423">
    <property type="term" value="P:chorismate biosynthetic process"/>
    <property type="evidence" value="ECO:0007669"/>
    <property type="project" value="UniProtKB-UniRule"/>
</dbReference>
<dbReference type="CDD" id="cd08195">
    <property type="entry name" value="DHQS"/>
    <property type="match status" value="1"/>
</dbReference>
<dbReference type="FunFam" id="1.20.1090.10:FF:000002">
    <property type="entry name" value="3-dehydroquinate synthase"/>
    <property type="match status" value="1"/>
</dbReference>
<dbReference type="FunFam" id="3.40.50.1970:FF:000001">
    <property type="entry name" value="3-dehydroquinate synthase"/>
    <property type="match status" value="1"/>
</dbReference>
<dbReference type="Gene3D" id="3.40.50.1970">
    <property type="match status" value="1"/>
</dbReference>
<dbReference type="Gene3D" id="1.20.1090.10">
    <property type="entry name" value="Dehydroquinate synthase-like - alpha domain"/>
    <property type="match status" value="1"/>
</dbReference>
<dbReference type="HAMAP" id="MF_00110">
    <property type="entry name" value="DHQ_synthase"/>
    <property type="match status" value="1"/>
</dbReference>
<dbReference type="InterPro" id="IPR050071">
    <property type="entry name" value="Dehydroquinate_synthase"/>
</dbReference>
<dbReference type="InterPro" id="IPR016037">
    <property type="entry name" value="DHQ_synth_AroB"/>
</dbReference>
<dbReference type="InterPro" id="IPR030963">
    <property type="entry name" value="DHQ_synth_fam"/>
</dbReference>
<dbReference type="InterPro" id="IPR030960">
    <property type="entry name" value="DHQS/DOIS_N"/>
</dbReference>
<dbReference type="InterPro" id="IPR056179">
    <property type="entry name" value="DHQS_C"/>
</dbReference>
<dbReference type="NCBIfam" id="TIGR01357">
    <property type="entry name" value="aroB"/>
    <property type="match status" value="1"/>
</dbReference>
<dbReference type="PANTHER" id="PTHR43622">
    <property type="entry name" value="3-DEHYDROQUINATE SYNTHASE"/>
    <property type="match status" value="1"/>
</dbReference>
<dbReference type="PANTHER" id="PTHR43622:SF7">
    <property type="entry name" value="3-DEHYDROQUINATE SYNTHASE, CHLOROPLASTIC"/>
    <property type="match status" value="1"/>
</dbReference>
<dbReference type="Pfam" id="PF01761">
    <property type="entry name" value="DHQ_synthase"/>
    <property type="match status" value="1"/>
</dbReference>
<dbReference type="Pfam" id="PF24621">
    <property type="entry name" value="DHQS_C"/>
    <property type="match status" value="1"/>
</dbReference>
<dbReference type="PIRSF" id="PIRSF001455">
    <property type="entry name" value="DHQ_synth"/>
    <property type="match status" value="1"/>
</dbReference>
<dbReference type="SUPFAM" id="SSF56796">
    <property type="entry name" value="Dehydroquinate synthase-like"/>
    <property type="match status" value="1"/>
</dbReference>
<accession>Q7MH84</accession>
<evidence type="ECO:0000255" key="1">
    <source>
        <dbReference type="HAMAP-Rule" id="MF_00110"/>
    </source>
</evidence>
<comment type="function">
    <text evidence="1">Catalyzes the conversion of 3-deoxy-D-arabino-heptulosonate 7-phosphate (DAHP) to dehydroquinate (DHQ).</text>
</comment>
<comment type="catalytic activity">
    <reaction evidence="1">
        <text>7-phospho-2-dehydro-3-deoxy-D-arabino-heptonate = 3-dehydroquinate + phosphate</text>
        <dbReference type="Rhea" id="RHEA:21968"/>
        <dbReference type="ChEBI" id="CHEBI:32364"/>
        <dbReference type="ChEBI" id="CHEBI:43474"/>
        <dbReference type="ChEBI" id="CHEBI:58394"/>
        <dbReference type="EC" id="4.2.3.4"/>
    </reaction>
</comment>
<comment type="cofactor">
    <cofactor evidence="1">
        <name>NAD(+)</name>
        <dbReference type="ChEBI" id="CHEBI:57540"/>
    </cofactor>
</comment>
<comment type="cofactor">
    <cofactor evidence="1">
        <name>Co(2+)</name>
        <dbReference type="ChEBI" id="CHEBI:48828"/>
    </cofactor>
    <cofactor evidence="1">
        <name>Zn(2+)</name>
        <dbReference type="ChEBI" id="CHEBI:29105"/>
    </cofactor>
    <text evidence="1">Binds 1 divalent metal cation per subunit. Can use either Co(2+) or Zn(2+).</text>
</comment>
<comment type="pathway">
    <text evidence="1">Metabolic intermediate biosynthesis; chorismate biosynthesis; chorismate from D-erythrose 4-phosphate and phosphoenolpyruvate: step 2/7.</text>
</comment>
<comment type="subcellular location">
    <subcellularLocation>
        <location evidence="1">Cytoplasm</location>
    </subcellularLocation>
</comment>
<comment type="similarity">
    <text evidence="1">Belongs to the sugar phosphate cyclases superfamily. Dehydroquinate synthase family.</text>
</comment>
<gene>
    <name evidence="1" type="primary">aroB</name>
    <name type="ordered locus">VV2988</name>
</gene>
<keyword id="KW-0028">Amino-acid biosynthesis</keyword>
<keyword id="KW-0057">Aromatic amino acid biosynthesis</keyword>
<keyword id="KW-0170">Cobalt</keyword>
<keyword id="KW-0963">Cytoplasm</keyword>
<keyword id="KW-0456">Lyase</keyword>
<keyword id="KW-0479">Metal-binding</keyword>
<keyword id="KW-0520">NAD</keyword>
<keyword id="KW-0547">Nucleotide-binding</keyword>
<keyword id="KW-0862">Zinc</keyword>